<protein>
    <recommendedName>
        <fullName evidence="5">Glucomannan 4-beta-mannosyltransferase 7</fullName>
        <ecNumber evidence="3">2.4.1.32</ecNumber>
    </recommendedName>
    <alternativeName>
        <fullName evidence="4">Cellulose synthase-like protein A7</fullName>
        <shortName evidence="4">AtCslA7</shortName>
    </alternativeName>
    <alternativeName>
        <fullName evidence="5">Glucomannan synthase</fullName>
    </alternativeName>
    <alternativeName>
        <fullName evidence="5">Mannan synthase 7</fullName>
    </alternativeName>
</protein>
<proteinExistence type="evidence at protein level"/>
<reference key="1">
    <citation type="journal article" date="2003" name="Plant Physiol.">
        <title>AtCSLA7, a cellulose synthase-like putative glycosyltransferase, is important for pollen tube growth and embryogenesis in Arabidopsis.</title>
        <authorList>
            <person name="Goubet F."/>
            <person name="Misrahi A."/>
            <person name="Park S.K."/>
            <person name="Zhang Z."/>
            <person name="Twell D."/>
            <person name="Dupree P."/>
        </authorList>
    </citation>
    <scope>NUCLEOTIDE SEQUENCE [MRNA]</scope>
    <scope>FUNCTION</scope>
    <scope>TISSUE SPECIFICITY</scope>
    <scope>DISRUPTION PHENOTYPE</scope>
    <source>
        <strain>cv. Columbia</strain>
        <tissue>Callus</tissue>
    </source>
</reference>
<reference key="2">
    <citation type="journal article" date="1999" name="Nature">
        <title>Sequence and analysis of chromosome 2 of the plant Arabidopsis thaliana.</title>
        <authorList>
            <person name="Lin X."/>
            <person name="Kaul S."/>
            <person name="Rounsley S.D."/>
            <person name="Shea T.P."/>
            <person name="Benito M.-I."/>
            <person name="Town C.D."/>
            <person name="Fujii C.Y."/>
            <person name="Mason T.M."/>
            <person name="Bowman C.L."/>
            <person name="Barnstead M.E."/>
            <person name="Feldblyum T.V."/>
            <person name="Buell C.R."/>
            <person name="Ketchum K.A."/>
            <person name="Lee J.J."/>
            <person name="Ronning C.M."/>
            <person name="Koo H.L."/>
            <person name="Moffat K.S."/>
            <person name="Cronin L.A."/>
            <person name="Shen M."/>
            <person name="Pai G."/>
            <person name="Van Aken S."/>
            <person name="Umayam L."/>
            <person name="Tallon L.J."/>
            <person name="Gill J.E."/>
            <person name="Adams M.D."/>
            <person name="Carrera A.J."/>
            <person name="Creasy T.H."/>
            <person name="Goodman H.M."/>
            <person name="Somerville C.R."/>
            <person name="Copenhaver G.P."/>
            <person name="Preuss D."/>
            <person name="Nierman W.C."/>
            <person name="White O."/>
            <person name="Eisen J.A."/>
            <person name="Salzberg S.L."/>
            <person name="Fraser C.M."/>
            <person name="Venter J.C."/>
        </authorList>
    </citation>
    <scope>NUCLEOTIDE SEQUENCE [LARGE SCALE GENOMIC DNA]</scope>
    <source>
        <strain>cv. Columbia</strain>
    </source>
</reference>
<reference key="3">
    <citation type="journal article" date="2017" name="Plant J.">
        <title>Araport11: a complete reannotation of the Arabidopsis thaliana reference genome.</title>
        <authorList>
            <person name="Cheng C.Y."/>
            <person name="Krishnakumar V."/>
            <person name="Chan A.P."/>
            <person name="Thibaud-Nissen F."/>
            <person name="Schobel S."/>
            <person name="Town C.D."/>
        </authorList>
    </citation>
    <scope>GENOME REANNOTATION</scope>
    <source>
        <strain>cv. Columbia</strain>
    </source>
</reference>
<reference key="4">
    <citation type="journal article" date="2003" name="Science">
        <title>Empirical analysis of transcriptional activity in the Arabidopsis genome.</title>
        <authorList>
            <person name="Yamada K."/>
            <person name="Lim J."/>
            <person name="Dale J.M."/>
            <person name="Chen H."/>
            <person name="Shinn P."/>
            <person name="Palm C.J."/>
            <person name="Southwick A.M."/>
            <person name="Wu H.C."/>
            <person name="Kim C.J."/>
            <person name="Nguyen M."/>
            <person name="Pham P.K."/>
            <person name="Cheuk R.F."/>
            <person name="Karlin-Newmann G."/>
            <person name="Liu S.X."/>
            <person name="Lam B."/>
            <person name="Sakano H."/>
            <person name="Wu T."/>
            <person name="Yu G."/>
            <person name="Miranda M."/>
            <person name="Quach H.L."/>
            <person name="Tripp M."/>
            <person name="Chang C.H."/>
            <person name="Lee J.M."/>
            <person name="Toriumi M.J."/>
            <person name="Chan M.M."/>
            <person name="Tang C.C."/>
            <person name="Onodera C.S."/>
            <person name="Deng J.M."/>
            <person name="Akiyama K."/>
            <person name="Ansari Y."/>
            <person name="Arakawa T."/>
            <person name="Banh J."/>
            <person name="Banno F."/>
            <person name="Bowser L."/>
            <person name="Brooks S.Y."/>
            <person name="Carninci P."/>
            <person name="Chao Q."/>
            <person name="Choy N."/>
            <person name="Enju A."/>
            <person name="Goldsmith A.D."/>
            <person name="Gurjal M."/>
            <person name="Hansen N.F."/>
            <person name="Hayashizaki Y."/>
            <person name="Johnson-Hopson C."/>
            <person name="Hsuan V.W."/>
            <person name="Iida K."/>
            <person name="Karnes M."/>
            <person name="Khan S."/>
            <person name="Koesema E."/>
            <person name="Ishida J."/>
            <person name="Jiang P.X."/>
            <person name="Jones T."/>
            <person name="Kawai J."/>
            <person name="Kamiya A."/>
            <person name="Meyers C."/>
            <person name="Nakajima M."/>
            <person name="Narusaka M."/>
            <person name="Seki M."/>
            <person name="Sakurai T."/>
            <person name="Satou M."/>
            <person name="Tamse R."/>
            <person name="Vaysberg M."/>
            <person name="Wallender E.K."/>
            <person name="Wong C."/>
            <person name="Yamamura Y."/>
            <person name="Yuan S."/>
            <person name="Shinozaki K."/>
            <person name="Davis R.W."/>
            <person name="Theologis A."/>
            <person name="Ecker J.R."/>
        </authorList>
    </citation>
    <scope>NUCLEOTIDE SEQUENCE [LARGE SCALE MRNA]</scope>
    <source>
        <strain>cv. Columbia</strain>
    </source>
</reference>
<reference key="5">
    <citation type="submission" date="2002-03" db="EMBL/GenBank/DDBJ databases">
        <title>Full-length cDNA from Arabidopsis thaliana.</title>
        <authorList>
            <person name="Brover V.V."/>
            <person name="Troukhan M.E."/>
            <person name="Alexandrov N.A."/>
            <person name="Lu Y.-P."/>
            <person name="Flavell R.B."/>
            <person name="Feldmann K.A."/>
        </authorList>
    </citation>
    <scope>NUCLEOTIDE SEQUENCE [LARGE SCALE MRNA]</scope>
</reference>
<reference key="6">
    <citation type="journal article" date="2000" name="Plant Physiol.">
        <title>The cellulose synthase superfamily.</title>
        <authorList>
            <person name="Richmond T.A."/>
            <person name="Somerville C.R."/>
        </authorList>
    </citation>
    <scope>GENE FAMILY</scope>
    <scope>NOMENCLATURE</scope>
</reference>
<reference key="7">
    <citation type="journal article" date="2005" name="Proc. Natl. Acad. Sci. U.S.A.">
        <title>Expression of cellulose synthase-like (Csl) genes in insect cells reveals that CslA family members encode mannan synthases.</title>
        <authorList>
            <person name="Liepman A.H."/>
            <person name="Wilkerson C.G."/>
            <person name="Keegstra K."/>
        </authorList>
    </citation>
    <scope>FUNCTION</scope>
    <scope>CATALYTIC ACTIVITY</scope>
</reference>
<organism>
    <name type="scientific">Arabidopsis thaliana</name>
    <name type="common">Mouse-ear cress</name>
    <dbReference type="NCBI Taxonomy" id="3702"/>
    <lineage>
        <taxon>Eukaryota</taxon>
        <taxon>Viridiplantae</taxon>
        <taxon>Streptophyta</taxon>
        <taxon>Embryophyta</taxon>
        <taxon>Tracheophyta</taxon>
        <taxon>Spermatophyta</taxon>
        <taxon>Magnoliopsida</taxon>
        <taxon>eudicotyledons</taxon>
        <taxon>Gunneridae</taxon>
        <taxon>Pentapetalae</taxon>
        <taxon>rosids</taxon>
        <taxon>malvids</taxon>
        <taxon>Brassicales</taxon>
        <taxon>Brassicaceae</taxon>
        <taxon>Camelineae</taxon>
        <taxon>Arabidopsis</taxon>
    </lineage>
</organism>
<name>CSLA7_ARATH</name>
<sequence>MSPLPIFHRLPHATFSSFLLSLSQAGSSKTSVAFLNAFKSEDIIARIGLWWQLIRAVVVVPVFKFLVLLCLVMSVMFFVEVMYMGIVVLYVKLFKRKPEKFYKWEAMEDDVECGSASYPMVLVQIPMYNEKEVCEQSIAAACKISWPSNRIIIQVLDDSTDPASKELVKKECDRWSKEGVNITFEIRDNRNGYKAGALREGMRHSYVKQCDYVAIFDADFQPDPDFLHRTVPFLIHNPKLALVQGRWEFVNAGQCMMTRLQEMSLSYHFTIEQQVGSSTFAFFGFNGTAGVWRISALNESGGWNDQTTVEDMDLAVRATLRGWKFLYIDDLKVKSELPCSFKALRSQQHRWTCGPANLLRKMAGQIIRSENVSLWKKWYMLYSFFFMRKIVAHILTFCFYCVILPATVLFPEVTVPKWAAFYLPSLITLLIAIGRLRSIHLLAFWVLFENAMSLLRAKALVMGLFETGRVQEWVVTEKLGDTLKTKLIPQVPNVRFRERVHLLELLVGAYLLFCGIYDIVYGKNTLYVYLLFQSVAFFVVGFGFVGKYVPASSYLA</sequence>
<dbReference type="EC" id="2.4.1.32" evidence="3"/>
<dbReference type="EMBL" id="AJ488284">
    <property type="protein sequence ID" value="CAD32548.1"/>
    <property type="molecule type" value="mRNA"/>
</dbReference>
<dbReference type="EMBL" id="AC006068">
    <property type="protein sequence ID" value="AAD15455.2"/>
    <property type="molecule type" value="Genomic_DNA"/>
</dbReference>
<dbReference type="EMBL" id="CP002685">
    <property type="protein sequence ID" value="AEC09136.1"/>
    <property type="molecule type" value="Genomic_DNA"/>
</dbReference>
<dbReference type="EMBL" id="AY059724">
    <property type="protein sequence ID" value="AAL24081.1"/>
    <property type="molecule type" value="mRNA"/>
</dbReference>
<dbReference type="EMBL" id="AY133807">
    <property type="protein sequence ID" value="AAM91741.1"/>
    <property type="molecule type" value="mRNA"/>
</dbReference>
<dbReference type="EMBL" id="AY084607">
    <property type="protein sequence ID" value="AAM61171.1"/>
    <property type="molecule type" value="mRNA"/>
</dbReference>
<dbReference type="PIR" id="C84771">
    <property type="entry name" value="C84771"/>
</dbReference>
<dbReference type="SMR" id="Q9ZQN8"/>
<dbReference type="FunCoup" id="Q9ZQN8">
    <property type="interactions" value="25"/>
</dbReference>
<dbReference type="STRING" id="3702.Q9ZQN8"/>
<dbReference type="CAZy" id="GT2">
    <property type="family name" value="Glycosyltransferase Family 2"/>
</dbReference>
<dbReference type="PaxDb" id="3702-AT2G35650.1"/>
<dbReference type="ProteomicsDB" id="222658"/>
<dbReference type="EnsemblPlants" id="AT2G35650.1">
    <property type="protein sequence ID" value="AT2G35650.1"/>
    <property type="gene ID" value="AT2G35650"/>
</dbReference>
<dbReference type="GeneID" id="818134"/>
<dbReference type="Gramene" id="AT2G35650.1">
    <property type="protein sequence ID" value="AT2G35650.1"/>
    <property type="gene ID" value="AT2G35650"/>
</dbReference>
<dbReference type="KEGG" id="ath:AT2G35650"/>
<dbReference type="Araport" id="AT2G35650"/>
<dbReference type="TAIR" id="AT2G35650">
    <property type="gene designation" value="CSLA07"/>
</dbReference>
<dbReference type="eggNOG" id="ENOG502QR7J">
    <property type="taxonomic scope" value="Eukaryota"/>
</dbReference>
<dbReference type="HOGENOM" id="CLU_012856_2_0_1"/>
<dbReference type="InParanoid" id="Q9ZQN8"/>
<dbReference type="OMA" id="KECERWS"/>
<dbReference type="PhylomeDB" id="Q9ZQN8"/>
<dbReference type="BioCyc" id="ARA:AT2G35650-MONOMER"/>
<dbReference type="PRO" id="PR:Q9ZQN8"/>
<dbReference type="Proteomes" id="UP000006548">
    <property type="component" value="Chromosome 2"/>
</dbReference>
<dbReference type="ExpressionAtlas" id="Q9ZQN8">
    <property type="expression patterns" value="baseline and differential"/>
</dbReference>
<dbReference type="GO" id="GO:0000139">
    <property type="term" value="C:Golgi membrane"/>
    <property type="evidence" value="ECO:0007669"/>
    <property type="project" value="UniProtKB-SubCell"/>
</dbReference>
<dbReference type="GO" id="GO:0047259">
    <property type="term" value="F:glucomannan 4-beta-mannosyltransferase activity"/>
    <property type="evidence" value="ECO:0007669"/>
    <property type="project" value="UniProtKB-EC"/>
</dbReference>
<dbReference type="GO" id="GO:0051753">
    <property type="term" value="F:mannan synthase activity"/>
    <property type="evidence" value="ECO:0000314"/>
    <property type="project" value="TAIR"/>
</dbReference>
<dbReference type="GO" id="GO:0071555">
    <property type="term" value="P:cell wall organization"/>
    <property type="evidence" value="ECO:0007669"/>
    <property type="project" value="UniProtKB-KW"/>
</dbReference>
<dbReference type="GO" id="GO:0009793">
    <property type="term" value="P:embryo development ending in seed dormancy"/>
    <property type="evidence" value="ECO:0000315"/>
    <property type="project" value="TAIR"/>
</dbReference>
<dbReference type="GO" id="GO:0009860">
    <property type="term" value="P:pollen tube growth"/>
    <property type="evidence" value="ECO:0000315"/>
    <property type="project" value="TAIR"/>
</dbReference>
<dbReference type="CDD" id="cd06437">
    <property type="entry name" value="CESA_CaSu_A2"/>
    <property type="match status" value="1"/>
</dbReference>
<dbReference type="FunFam" id="3.90.550.10:FF:000015">
    <property type="entry name" value="Glucomannan 4-beta-mannosyltransferase 9"/>
    <property type="match status" value="1"/>
</dbReference>
<dbReference type="Gene3D" id="3.90.550.10">
    <property type="entry name" value="Spore Coat Polysaccharide Biosynthesis Protein SpsA, Chain A"/>
    <property type="match status" value="1"/>
</dbReference>
<dbReference type="InterPro" id="IPR001173">
    <property type="entry name" value="Glyco_trans_2-like"/>
</dbReference>
<dbReference type="InterPro" id="IPR029044">
    <property type="entry name" value="Nucleotide-diphossugar_trans"/>
</dbReference>
<dbReference type="PANTHER" id="PTHR32044:SF78">
    <property type="entry name" value="GLUCOMANNAN 4-BETA-MANNOSYLTRANSFERASE 7"/>
    <property type="match status" value="1"/>
</dbReference>
<dbReference type="PANTHER" id="PTHR32044">
    <property type="entry name" value="GLUCOMANNAN 4-BETA-MANNOSYLTRANSFERASE 9"/>
    <property type="match status" value="1"/>
</dbReference>
<dbReference type="Pfam" id="PF13632">
    <property type="entry name" value="Glyco_trans_2_3"/>
    <property type="match status" value="1"/>
</dbReference>
<dbReference type="SUPFAM" id="SSF53448">
    <property type="entry name" value="Nucleotide-diphospho-sugar transferases"/>
    <property type="match status" value="1"/>
</dbReference>
<comment type="function">
    <text evidence="2 3">Probable mannan synthase which consists of a 4-beta-mannosyltransferase activity on mannan using GDP-mannose. The beta-1,4-mannan product is the backbone for galactomannan synthesis by galactomannan galactosyltransferase. Galactomannan is a noncellulosic polysaccharides of plant cell wall (PubMed:15647349). Required for synthesis of a cell wall polysaccharide essential for pollen tube growth, for cell wall structure, or for signaling during plant embryo development (PubMed:12586879).</text>
</comment>
<comment type="catalytic activity">
    <reaction evidence="3">
        <text>GDP-mannose + (glucomannan)n = GDP + (glucomannan)n+1.</text>
        <dbReference type="EC" id="2.4.1.32"/>
    </reaction>
</comment>
<comment type="subcellular location">
    <subcellularLocation>
        <location evidence="5">Golgi apparatus membrane</location>
        <topology evidence="5">Multi-pass membrane protein</topology>
    </subcellularLocation>
</comment>
<comment type="tissue specificity">
    <text evidence="2">Ubiquitous.</text>
</comment>
<comment type="disruption phenotype">
    <text evidence="2">Embryonic lethality when homozygous due to defective pollen tube growth and disruption of embryonic development.</text>
</comment>
<comment type="similarity">
    <text evidence="5">Belongs to the glycosyltransferase 2 family. Plant cellulose synthase-like A subfamily.</text>
</comment>
<keyword id="KW-0961">Cell wall biogenesis/degradation</keyword>
<keyword id="KW-0328">Glycosyltransferase</keyword>
<keyword id="KW-0333">Golgi apparatus</keyword>
<keyword id="KW-0472">Membrane</keyword>
<keyword id="KW-1185">Reference proteome</keyword>
<keyword id="KW-0808">Transferase</keyword>
<keyword id="KW-0812">Transmembrane</keyword>
<keyword id="KW-1133">Transmembrane helix</keyword>
<feature type="chain" id="PRO_0000319329" description="Glucomannan 4-beta-mannosyltransferase 7">
    <location>
        <begin position="1"/>
        <end position="556"/>
    </location>
</feature>
<feature type="transmembrane region" description="Helical" evidence="1">
    <location>
        <begin position="58"/>
        <end position="78"/>
    </location>
</feature>
<feature type="transmembrane region" description="Helical" evidence="1">
    <location>
        <begin position="390"/>
        <end position="410"/>
    </location>
</feature>
<feature type="transmembrane region" description="Helical" evidence="1">
    <location>
        <begin position="426"/>
        <end position="448"/>
    </location>
</feature>
<feature type="transmembrane region" description="Helical" evidence="1">
    <location>
        <begin position="502"/>
        <end position="522"/>
    </location>
</feature>
<feature type="transmembrane region" description="Helical" evidence="1">
    <location>
        <begin position="526"/>
        <end position="546"/>
    </location>
</feature>
<feature type="active site" evidence="1">
    <location>
        <position position="158"/>
    </location>
</feature>
<feature type="active site" evidence="1">
    <location>
        <position position="311"/>
    </location>
</feature>
<feature type="binding site" evidence="1">
    <location>
        <position position="217"/>
    </location>
    <ligand>
        <name>substrate</name>
    </ligand>
</feature>
<feature type="binding site" evidence="1">
    <location>
        <position position="219"/>
    </location>
    <ligand>
        <name>substrate</name>
    </ligand>
</feature>
<feature type="sequence conflict" description="In Ref. 5; AAM61171." evidence="5" ref="5">
    <original>L</original>
    <variation>V</variation>
    <location>
        <position position="68"/>
    </location>
</feature>
<feature type="sequence conflict" description="In Ref. 5; AAM61171." evidence="5" ref="5">
    <original>D</original>
    <variation>H</variation>
    <location>
        <position position="481"/>
    </location>
</feature>
<accession>Q9ZQN8</accession>
<accession>Q8LFW7</accession>
<accession>Q93YX2</accession>
<gene>
    <name evidence="4" type="primary">CSLA7</name>
    <name type="ordered locus">At2g35650</name>
    <name type="ORF">T20F21.16</name>
</gene>
<evidence type="ECO:0000255" key="1"/>
<evidence type="ECO:0000269" key="2">
    <source>
    </source>
</evidence>
<evidence type="ECO:0000269" key="3">
    <source>
    </source>
</evidence>
<evidence type="ECO:0000303" key="4">
    <source>
    </source>
</evidence>
<evidence type="ECO:0000305" key="5"/>